<reference key="1">
    <citation type="journal article" date="1997" name="FEMS Microbiol. Lett.">
        <title>Purification and properties of an F420H2 dehydrogenase from Methanosarcina mazei Go1.</title>
        <authorList>
            <person name="Abken H.-J."/>
            <person name="Deppenmeier U."/>
        </authorList>
    </citation>
    <scope>NUCLEOTIDE SEQUENCE [GENOMIC DNA]</scope>
    <scope>FUNCTION</scope>
    <scope>CATALYTIC ACTIVITY</scope>
    <scope>BIOPHYSICOCHEMICAL PROPERTIES</scope>
    <scope>SUBSTRATE SPECIFICITY</scope>
    <scope>SUBCELLULAR LOCATION</scope>
    <source>
        <strain>ATCC BAA-159 / DSM 3647 / Goe1 / Go1 / JCM 11833 / OCM 88</strain>
    </source>
</reference>
<reference key="2">
    <citation type="journal article" date="2000" name="J. Biol. Chem.">
        <title>The F420H2 dehydrogenase from Methanosarcina mazei is a Redox-driven proton pump closely related to NADH dehydrogenases.</title>
        <authorList>
            <person name="Baumer S."/>
            <person name="Ide T."/>
            <person name="Jacobi C."/>
            <person name="Johann A."/>
            <person name="Gottschalk G."/>
            <person name="Deppenmeier U."/>
        </authorList>
    </citation>
    <scope>NUCLEOTIDE SEQUENCE [GENOMIC DNA]</scope>
    <scope>FUNCTION IN THE PROTON TRANSLOCATION</scope>
    <scope>SUBUNIT</scope>
    <scope>NOMENCLATURE</scope>
    <source>
        <strain>ATCC BAA-159 / DSM 3647 / Goe1 / Go1 / JCM 11833 / OCM 88</strain>
    </source>
</reference>
<reference key="3">
    <citation type="journal article" date="2002" name="J. Mol. Microbiol. Biotechnol.">
        <title>The genome of Methanosarcina mazei: evidence for lateral gene transfer between Bacteria and Archaea.</title>
        <authorList>
            <person name="Deppenmeier U."/>
            <person name="Johann A."/>
            <person name="Hartsch T."/>
            <person name="Merkl R."/>
            <person name="Schmitz R.A."/>
            <person name="Martinez-Arias R."/>
            <person name="Henne A."/>
            <person name="Wiezer A."/>
            <person name="Baeumer S."/>
            <person name="Jacobi C."/>
            <person name="Brueggemann H."/>
            <person name="Lienard T."/>
            <person name="Christmann A."/>
            <person name="Boemecke M."/>
            <person name="Steckel S."/>
            <person name="Bhattacharyya A."/>
            <person name="Lykidis A."/>
            <person name="Overbeek R."/>
            <person name="Klenk H.-P."/>
            <person name="Gunsalus R.P."/>
            <person name="Fritz H.-J."/>
            <person name="Gottschalk G."/>
        </authorList>
    </citation>
    <scope>NUCLEOTIDE SEQUENCE [LARGE SCALE GENOMIC DNA]</scope>
    <source>
        <strain>ATCC BAA-159 / DSM 3647 / Goe1 / Go1 / JCM 11833 / OCM 88</strain>
    </source>
</reference>
<gene>
    <name type="primary">fpoN</name>
    <name type="ordered locus">MM_2480</name>
</gene>
<protein>
    <recommendedName>
        <fullName>F(420)H(2) dehydrogenase subunit N</fullName>
        <ecNumber evidence="3">1.5.98.3</ecNumber>
    </recommendedName>
    <alternativeName>
        <fullName>F(420)H(2)-dependent phenazine dehydrogenase subunit N</fullName>
    </alternativeName>
    <alternativeName>
        <fullName>F(420)H(2)-dependent phenazine oxidoreductase subunit N</fullName>
        <shortName>FPO subunit N</shortName>
    </alternativeName>
    <alternativeName>
        <fullName>Methanophenazine hydrogenase subunit N</fullName>
    </alternativeName>
    <alternativeName>
        <fullName>Methanosarcina-phenazine hydrogenase subunit N</fullName>
    </alternativeName>
</protein>
<dbReference type="EC" id="1.5.98.3" evidence="3"/>
<dbReference type="EMBL" id="AF228525">
    <property type="protein sequence ID" value="AAF65741.1"/>
    <property type="molecule type" value="Genomic_DNA"/>
</dbReference>
<dbReference type="EMBL" id="AE008384">
    <property type="protein sequence ID" value="AAM32176.1"/>
    <property type="molecule type" value="Genomic_DNA"/>
</dbReference>
<dbReference type="RefSeq" id="WP_011034398.1">
    <property type="nucleotide sequence ID" value="NC_003901.1"/>
</dbReference>
<dbReference type="SMR" id="F1SVL2"/>
<dbReference type="TCDB" id="3.D.13.1.1">
    <property type="family name" value="the h+ extruding f420 dehydrogenase (fpo) complex family"/>
</dbReference>
<dbReference type="TCDB" id="3.D.9.1.1">
    <property type="family name" value="the h(+)-translocating f420h2 dehydrogenase (f420h2dh) family"/>
</dbReference>
<dbReference type="DNASU" id="1480822"/>
<dbReference type="GeneID" id="1480822"/>
<dbReference type="KEGG" id="mma:MM_2480"/>
<dbReference type="PATRIC" id="fig|192952.21.peg.2838"/>
<dbReference type="eggNOG" id="arCOG01540">
    <property type="taxonomic scope" value="Archaea"/>
</dbReference>
<dbReference type="HOGENOM" id="CLU_007100_1_5_2"/>
<dbReference type="BRENDA" id="1.12.98.3">
    <property type="organism ID" value="3270"/>
</dbReference>
<dbReference type="Proteomes" id="UP000000595">
    <property type="component" value="Chromosome"/>
</dbReference>
<dbReference type="GO" id="GO:0005886">
    <property type="term" value="C:plasma membrane"/>
    <property type="evidence" value="ECO:0007669"/>
    <property type="project" value="UniProtKB-SubCell"/>
</dbReference>
<dbReference type="GO" id="GO:0051911">
    <property type="term" value="F:Methanosarcina-phenazine hydrogenase activity"/>
    <property type="evidence" value="ECO:0007669"/>
    <property type="project" value="UniProtKB-EC"/>
</dbReference>
<dbReference type="GO" id="GO:0008137">
    <property type="term" value="F:NADH dehydrogenase (ubiquinone) activity"/>
    <property type="evidence" value="ECO:0007669"/>
    <property type="project" value="InterPro"/>
</dbReference>
<dbReference type="GO" id="GO:0043738">
    <property type="term" value="F:reduced coenzyme F420 dehydrogenase activity"/>
    <property type="evidence" value="ECO:0007669"/>
    <property type="project" value="RHEA"/>
</dbReference>
<dbReference type="GO" id="GO:0042773">
    <property type="term" value="P:ATP synthesis coupled electron transport"/>
    <property type="evidence" value="ECO:0007669"/>
    <property type="project" value="InterPro"/>
</dbReference>
<dbReference type="GO" id="GO:0015948">
    <property type="term" value="P:methanogenesis"/>
    <property type="evidence" value="ECO:0007669"/>
    <property type="project" value="UniProtKB-KW"/>
</dbReference>
<dbReference type="GO" id="GO:0015945">
    <property type="term" value="P:methanol metabolic process"/>
    <property type="evidence" value="ECO:0007669"/>
    <property type="project" value="UniProtKB-KW"/>
</dbReference>
<dbReference type="HAMAP" id="MF_00445">
    <property type="entry name" value="NDH1_NuoN_1"/>
    <property type="match status" value="1"/>
</dbReference>
<dbReference type="InterPro" id="IPR010096">
    <property type="entry name" value="NADH-Q_OxRdtase_suN/2"/>
</dbReference>
<dbReference type="InterPro" id="IPR001750">
    <property type="entry name" value="ND/Mrp_TM"/>
</dbReference>
<dbReference type="NCBIfam" id="TIGR01770">
    <property type="entry name" value="NDH_I_N"/>
    <property type="match status" value="1"/>
</dbReference>
<dbReference type="PANTHER" id="PTHR22773">
    <property type="entry name" value="NADH DEHYDROGENASE"/>
    <property type="match status" value="1"/>
</dbReference>
<dbReference type="Pfam" id="PF00361">
    <property type="entry name" value="Proton_antipo_M"/>
    <property type="match status" value="1"/>
</dbReference>
<dbReference type="PRINTS" id="PR01434">
    <property type="entry name" value="NADHDHGNASE5"/>
</dbReference>
<name>FPON_METMA</name>
<accession>F1SVL2</accession>
<accession>Q7LWK1</accession>
<accession>Q9P9F3</accession>
<evidence type="ECO:0000255" key="1"/>
<evidence type="ECO:0000269" key="2">
    <source>
    </source>
</evidence>
<evidence type="ECO:0000269" key="3">
    <source ref="1"/>
</evidence>
<evidence type="ECO:0000305" key="4"/>
<comment type="function">
    <text evidence="2 3">Component of the F(420)H(2) dehydrogenase (FPO complex) which is part of the energy-conserving F(420)H(2):heterodisulfide oxidoreductase system. The membrane-bound electron transfer system of the complex plays an important role in the metabolism of methylotrophic methanogens when the organisms grow on methanol or methylamines. Catalyzes the oxidation of methanophenazine to dihydromethanophenazine. It shuttles electrons from F(420)H(2), via FAD and iron-sulfur (Fe-S) centers, to methanophenazine (an electron carrier in the membrane). It couples the redox reaction to proton translocation (for every two electrons transferred, two hydrogen ions are translocated across the cytoplasmic membrane), and thus conserves the redox energy in a proton gradient. It also catalyzes the oxidation of F(420)H(2) with quinones such as 2,3-dimethyl-1,4-naphthoquinone, 2-methyl-1,4-naphthoquinone and tetramethyl-p-benzoquinone.</text>
</comment>
<comment type="catalytic activity">
    <reaction evidence="3">
        <text>methanophenazine + reduced coenzyme F420-(gamma-L-Glu)(n) = dihydromethanophenazine + oxidized coenzyme F420-(gamma-L-Glu)(n) + H(+)</text>
        <dbReference type="Rhea" id="RHEA:54752"/>
        <dbReference type="Rhea" id="RHEA-COMP:12939"/>
        <dbReference type="Rhea" id="RHEA-COMP:14378"/>
        <dbReference type="ChEBI" id="CHEBI:15378"/>
        <dbReference type="ChEBI" id="CHEBI:29118"/>
        <dbReference type="ChEBI" id="CHEBI:50375"/>
        <dbReference type="ChEBI" id="CHEBI:133980"/>
        <dbReference type="ChEBI" id="CHEBI:139511"/>
        <dbReference type="EC" id="1.5.98.3"/>
    </reaction>
</comment>
<comment type="biophysicochemical properties">
    <kinetics>
        <KM evidence="3">7 uM for F(420)H(2) (at 37 degrees Celsius and pH 7)</KM>
        <Vmax evidence="3">17.0 umol/min/mg enzyme (at 37 degrees Celsius and pH 7)</Vmax>
        <text>Measured for the whole complex.</text>
    </kinetics>
    <phDependence>
        <text evidence="3">Optimum pH is 8.5.</text>
    </phDependence>
    <temperatureDependence>
        <text evidence="3">Optimum temperature is 39 degrees Celsius.</text>
    </temperatureDependence>
</comment>
<comment type="subunit">
    <text evidence="2">The FPO complex is composed of at least 13 different subunits. FpoA, FpoH, FpoJ, FpoK, FpoL, FpoM and FpoN proteins constitute the membrane sector of the complex.</text>
</comment>
<comment type="subcellular location">
    <subcellularLocation>
        <location evidence="4">Cell membrane</location>
        <topology evidence="4">Multi-pass membrane protein</topology>
    </subcellularLocation>
</comment>
<comment type="similarity">
    <text evidence="4">Belongs to the complex I subunit 2 family.</text>
</comment>
<sequence length="493" mass="52716">MQEIMYLAPELVLVATGLVILLTGVFLSPQSKNILGYLATLGTLAAIFLTVKSFGLLTMEGFSVQYTIFSETLSIDALSQFFKLVFLAVALIVSIASIKYTENSDHTEEFYTLVLFATFGMMIVASANDLILLFCAFELASLATFALAGFEKQNARSLEGAMKYFVIGSVSAALMLFGLSFVYGATGTTSIPLIAQNPGLLTGNPIGIVAIVLLTAGFGFKMALVPFHMWAPDTYQGSPSVVSALLAAGSKKMGFVAAFRVFIIALAALQPDWQFMFTLLAVVTMTFGNVVAVAQTSVKRMLAYSSLAQAGYIAMAFAVMTPVALAGGIMYTLAHAFMKAGAFIAAAAVVWMITSEKTGNLDIPDHLDSFRGLGKRMPLAALCMTVFVFALAGIPPTAGFMAKFVLFSSTIQAGMTWLAVIAILNSALSLFYYARLVKYMYFMPPEGKTEKVSIPFPYAAALLVAVAGVLVMGLWPEPFVELAMKAAMVLVPF</sequence>
<proteinExistence type="evidence at protein level"/>
<feature type="chain" id="PRO_0000423959" description="F(420)H(2) dehydrogenase subunit N">
    <location>
        <begin position="1"/>
        <end position="493"/>
    </location>
</feature>
<feature type="transmembrane region" description="Helical" evidence="1">
    <location>
        <begin position="7"/>
        <end position="27"/>
    </location>
</feature>
<feature type="transmembrane region" description="Helical" evidence="1">
    <location>
        <begin position="34"/>
        <end position="54"/>
    </location>
</feature>
<feature type="transmembrane region" description="Helical" evidence="1">
    <location>
        <begin position="78"/>
        <end position="98"/>
    </location>
</feature>
<feature type="transmembrane region" description="Helical" evidence="1">
    <location>
        <begin position="107"/>
        <end position="127"/>
    </location>
</feature>
<feature type="transmembrane region" description="Helical" evidence="1">
    <location>
        <begin position="130"/>
        <end position="150"/>
    </location>
</feature>
<feature type="transmembrane region" description="Helical" evidence="1">
    <location>
        <begin position="165"/>
        <end position="185"/>
    </location>
</feature>
<feature type="transmembrane region" description="Helical" evidence="1">
    <location>
        <begin position="205"/>
        <end position="225"/>
    </location>
</feature>
<feature type="transmembrane region" description="Helical" evidence="1">
    <location>
        <begin position="244"/>
        <end position="264"/>
    </location>
</feature>
<feature type="transmembrane region" description="Helical" evidence="1">
    <location>
        <begin position="273"/>
        <end position="293"/>
    </location>
</feature>
<feature type="transmembrane region" description="Helical" evidence="1">
    <location>
        <begin position="310"/>
        <end position="330"/>
    </location>
</feature>
<feature type="transmembrane region" description="Helical" evidence="1">
    <location>
        <begin position="333"/>
        <end position="353"/>
    </location>
</feature>
<feature type="transmembrane region" description="Helical" evidence="1">
    <location>
        <begin position="381"/>
        <end position="401"/>
    </location>
</feature>
<feature type="transmembrane region" description="Helical" evidence="1">
    <location>
        <begin position="404"/>
        <end position="424"/>
    </location>
</feature>
<feature type="transmembrane region" description="Helical" evidence="1">
    <location>
        <begin position="454"/>
        <end position="474"/>
    </location>
</feature>
<keyword id="KW-1003">Cell membrane</keyword>
<keyword id="KW-0249">Electron transport</keyword>
<keyword id="KW-0472">Membrane</keyword>
<keyword id="KW-0484">Methanogenesis</keyword>
<keyword id="KW-0485">Methanol utilization</keyword>
<keyword id="KW-0560">Oxidoreductase</keyword>
<keyword id="KW-0812">Transmembrane</keyword>
<keyword id="KW-1133">Transmembrane helix</keyword>
<keyword id="KW-0813">Transport</keyword>
<organism>
    <name type="scientific">Methanosarcina mazei (strain ATCC BAA-159 / DSM 3647 / Goe1 / Go1 / JCM 11833 / OCM 88)</name>
    <name type="common">Methanosarcina frisia</name>
    <dbReference type="NCBI Taxonomy" id="192952"/>
    <lineage>
        <taxon>Archaea</taxon>
        <taxon>Methanobacteriati</taxon>
        <taxon>Methanobacteriota</taxon>
        <taxon>Stenosarchaea group</taxon>
        <taxon>Methanomicrobia</taxon>
        <taxon>Methanosarcinales</taxon>
        <taxon>Methanosarcinaceae</taxon>
        <taxon>Methanosarcina</taxon>
    </lineage>
</organism>